<name>YBEY_ECO81</name>
<evidence type="ECO:0000255" key="1">
    <source>
        <dbReference type="HAMAP-Rule" id="MF_00009"/>
    </source>
</evidence>
<protein>
    <recommendedName>
        <fullName evidence="1">Endoribonuclease YbeY</fullName>
        <ecNumber evidence="1">3.1.-.-</ecNumber>
    </recommendedName>
</protein>
<accession>B7MPH5</accession>
<proteinExistence type="inferred from homology"/>
<organism>
    <name type="scientific">Escherichia coli O81 (strain ED1a)</name>
    <dbReference type="NCBI Taxonomy" id="585397"/>
    <lineage>
        <taxon>Bacteria</taxon>
        <taxon>Pseudomonadati</taxon>
        <taxon>Pseudomonadota</taxon>
        <taxon>Gammaproteobacteria</taxon>
        <taxon>Enterobacterales</taxon>
        <taxon>Enterobacteriaceae</taxon>
        <taxon>Escherichia</taxon>
    </lineage>
</organism>
<keyword id="KW-0963">Cytoplasm</keyword>
<keyword id="KW-0255">Endonuclease</keyword>
<keyword id="KW-0378">Hydrolase</keyword>
<keyword id="KW-0479">Metal-binding</keyword>
<keyword id="KW-0540">Nuclease</keyword>
<keyword id="KW-0690">Ribosome biogenesis</keyword>
<keyword id="KW-0698">rRNA processing</keyword>
<keyword id="KW-0862">Zinc</keyword>
<gene>
    <name evidence="1" type="primary">ybeY</name>
    <name type="ordered locus">ECED1_0650</name>
</gene>
<sequence>MSQVILDLQLACEDNSGLPEESQFQTWLNAVIPQFQEESEVTIRVVDTAESHCLNLTYRGKDKPTNVLSFPFEVPPGMEMSLLGDLIICRQVVEKEAQEQGKPLEAHWAHMVVHGSLHLLGYDHIEDDEAEEMEAIETEIMLALGYEDPYIAEKE</sequence>
<feature type="chain" id="PRO_1000199977" description="Endoribonuclease YbeY">
    <location>
        <begin position="1"/>
        <end position="155"/>
    </location>
</feature>
<feature type="binding site" evidence="1">
    <location>
        <position position="114"/>
    </location>
    <ligand>
        <name>Zn(2+)</name>
        <dbReference type="ChEBI" id="CHEBI:29105"/>
        <note>catalytic</note>
    </ligand>
</feature>
<feature type="binding site" evidence="1">
    <location>
        <position position="118"/>
    </location>
    <ligand>
        <name>Zn(2+)</name>
        <dbReference type="ChEBI" id="CHEBI:29105"/>
        <note>catalytic</note>
    </ligand>
</feature>
<feature type="binding site" evidence="1">
    <location>
        <position position="124"/>
    </location>
    <ligand>
        <name>Zn(2+)</name>
        <dbReference type="ChEBI" id="CHEBI:29105"/>
        <note>catalytic</note>
    </ligand>
</feature>
<comment type="function">
    <text evidence="1">Single strand-specific metallo-endoribonuclease involved in late-stage 70S ribosome quality control and in maturation of the 3' terminus of the 16S rRNA.</text>
</comment>
<comment type="cofactor">
    <cofactor evidence="1">
        <name>Zn(2+)</name>
        <dbReference type="ChEBI" id="CHEBI:29105"/>
    </cofactor>
    <text evidence="1">Binds 1 zinc ion.</text>
</comment>
<comment type="subcellular location">
    <subcellularLocation>
        <location evidence="1">Cytoplasm</location>
    </subcellularLocation>
</comment>
<comment type="similarity">
    <text evidence="1">Belongs to the endoribonuclease YbeY family.</text>
</comment>
<dbReference type="EC" id="3.1.-.-" evidence="1"/>
<dbReference type="EMBL" id="CU928162">
    <property type="protein sequence ID" value="CAR06857.1"/>
    <property type="molecule type" value="Genomic_DNA"/>
</dbReference>
<dbReference type="RefSeq" id="WP_000084460.1">
    <property type="nucleotide sequence ID" value="NC_011745.1"/>
</dbReference>
<dbReference type="SMR" id="B7MPH5"/>
<dbReference type="KEGG" id="ecq:ECED1_0650"/>
<dbReference type="HOGENOM" id="CLU_106710_0_1_6"/>
<dbReference type="Proteomes" id="UP000000748">
    <property type="component" value="Chromosome"/>
</dbReference>
<dbReference type="GO" id="GO:0005737">
    <property type="term" value="C:cytoplasm"/>
    <property type="evidence" value="ECO:0007669"/>
    <property type="project" value="UniProtKB-SubCell"/>
</dbReference>
<dbReference type="GO" id="GO:0004222">
    <property type="term" value="F:metalloendopeptidase activity"/>
    <property type="evidence" value="ECO:0007669"/>
    <property type="project" value="InterPro"/>
</dbReference>
<dbReference type="GO" id="GO:0004521">
    <property type="term" value="F:RNA endonuclease activity"/>
    <property type="evidence" value="ECO:0007669"/>
    <property type="project" value="UniProtKB-UniRule"/>
</dbReference>
<dbReference type="GO" id="GO:0008270">
    <property type="term" value="F:zinc ion binding"/>
    <property type="evidence" value="ECO:0007669"/>
    <property type="project" value="UniProtKB-UniRule"/>
</dbReference>
<dbReference type="GO" id="GO:0006364">
    <property type="term" value="P:rRNA processing"/>
    <property type="evidence" value="ECO:0007669"/>
    <property type="project" value="UniProtKB-UniRule"/>
</dbReference>
<dbReference type="FunFam" id="3.40.390.30:FF:000001">
    <property type="entry name" value="Endoribonuclease YbeY"/>
    <property type="match status" value="1"/>
</dbReference>
<dbReference type="Gene3D" id="3.40.390.30">
    <property type="entry name" value="Metalloproteases ('zincins'), catalytic domain"/>
    <property type="match status" value="1"/>
</dbReference>
<dbReference type="HAMAP" id="MF_00009">
    <property type="entry name" value="Endoribonucl_YbeY"/>
    <property type="match status" value="1"/>
</dbReference>
<dbReference type="InterPro" id="IPR023091">
    <property type="entry name" value="MetalPrtase_cat_dom_sf_prd"/>
</dbReference>
<dbReference type="InterPro" id="IPR002036">
    <property type="entry name" value="YbeY"/>
</dbReference>
<dbReference type="InterPro" id="IPR020549">
    <property type="entry name" value="YbeY_CS"/>
</dbReference>
<dbReference type="NCBIfam" id="TIGR00043">
    <property type="entry name" value="rRNA maturation RNase YbeY"/>
    <property type="match status" value="1"/>
</dbReference>
<dbReference type="PANTHER" id="PTHR46986">
    <property type="entry name" value="ENDORIBONUCLEASE YBEY, CHLOROPLASTIC"/>
    <property type="match status" value="1"/>
</dbReference>
<dbReference type="PANTHER" id="PTHR46986:SF1">
    <property type="entry name" value="ENDORIBONUCLEASE YBEY, CHLOROPLASTIC"/>
    <property type="match status" value="1"/>
</dbReference>
<dbReference type="Pfam" id="PF02130">
    <property type="entry name" value="YbeY"/>
    <property type="match status" value="1"/>
</dbReference>
<dbReference type="SUPFAM" id="SSF55486">
    <property type="entry name" value="Metalloproteases ('zincins'), catalytic domain"/>
    <property type="match status" value="1"/>
</dbReference>
<dbReference type="PROSITE" id="PS01306">
    <property type="entry name" value="UPF0054"/>
    <property type="match status" value="1"/>
</dbReference>
<reference key="1">
    <citation type="journal article" date="2009" name="PLoS Genet.">
        <title>Organised genome dynamics in the Escherichia coli species results in highly diverse adaptive paths.</title>
        <authorList>
            <person name="Touchon M."/>
            <person name="Hoede C."/>
            <person name="Tenaillon O."/>
            <person name="Barbe V."/>
            <person name="Baeriswyl S."/>
            <person name="Bidet P."/>
            <person name="Bingen E."/>
            <person name="Bonacorsi S."/>
            <person name="Bouchier C."/>
            <person name="Bouvet O."/>
            <person name="Calteau A."/>
            <person name="Chiapello H."/>
            <person name="Clermont O."/>
            <person name="Cruveiller S."/>
            <person name="Danchin A."/>
            <person name="Diard M."/>
            <person name="Dossat C."/>
            <person name="Karoui M.E."/>
            <person name="Frapy E."/>
            <person name="Garry L."/>
            <person name="Ghigo J.M."/>
            <person name="Gilles A.M."/>
            <person name="Johnson J."/>
            <person name="Le Bouguenec C."/>
            <person name="Lescat M."/>
            <person name="Mangenot S."/>
            <person name="Martinez-Jehanne V."/>
            <person name="Matic I."/>
            <person name="Nassif X."/>
            <person name="Oztas S."/>
            <person name="Petit M.A."/>
            <person name="Pichon C."/>
            <person name="Rouy Z."/>
            <person name="Ruf C.S."/>
            <person name="Schneider D."/>
            <person name="Tourret J."/>
            <person name="Vacherie B."/>
            <person name="Vallenet D."/>
            <person name="Medigue C."/>
            <person name="Rocha E.P.C."/>
            <person name="Denamur E."/>
        </authorList>
    </citation>
    <scope>NUCLEOTIDE SEQUENCE [LARGE SCALE GENOMIC DNA]</scope>
    <source>
        <strain>ED1a</strain>
    </source>
</reference>